<feature type="chain" id="PRO_0000410571" description="Uncharacterized protein 050L">
    <location>
        <begin position="1"/>
        <end position="229"/>
    </location>
</feature>
<feature type="region of interest" description="Disordered" evidence="1">
    <location>
        <begin position="61"/>
        <end position="229"/>
    </location>
</feature>
<feature type="compositionally biased region" description="Basic and acidic residues" evidence="1">
    <location>
        <begin position="109"/>
        <end position="128"/>
    </location>
</feature>
<feature type="compositionally biased region" description="Low complexity" evidence="1">
    <location>
        <begin position="166"/>
        <end position="194"/>
    </location>
</feature>
<feature type="compositionally biased region" description="Acidic residues" evidence="1">
    <location>
        <begin position="195"/>
        <end position="204"/>
    </location>
</feature>
<feature type="compositionally biased region" description="Basic and acidic residues" evidence="1">
    <location>
        <begin position="218"/>
        <end position="229"/>
    </location>
</feature>
<gene>
    <name type="ORF">FV3-050L</name>
</gene>
<organism>
    <name type="scientific">Frog virus 3 (isolate Goorha)</name>
    <name type="common">FV-3</name>
    <dbReference type="NCBI Taxonomy" id="654924"/>
    <lineage>
        <taxon>Viruses</taxon>
        <taxon>Varidnaviria</taxon>
        <taxon>Bamfordvirae</taxon>
        <taxon>Nucleocytoviricota</taxon>
        <taxon>Megaviricetes</taxon>
        <taxon>Pimascovirales</taxon>
        <taxon>Iridoviridae</taxon>
        <taxon>Alphairidovirinae</taxon>
        <taxon>Ranavirus</taxon>
        <taxon>Frog virus 3</taxon>
    </lineage>
</organism>
<sequence length="229" mass="25692">MQVYSPSKISQQLETFLNSVANGLGHTMSHAMSQTFSETIVASVAKKAPKTSVLAAAQAAMQAEDKVSKPKKVKKTKSYADAAPKRVKKVKAPKEDTVVSEPEEAVVEQQEKQQPEKAVVEQQEKQQPEEAVVEQQEKQQPEEAVVEQQEKQQPEEAVVESEQPEQPEQPERQQQAQPERQQQAQPERQQQAQPEEAEDAEQEPVEQPTAKPKKVRKTQTESEDKPKRG</sequence>
<accession>Q6GZS6</accession>
<proteinExistence type="predicted"/>
<dbReference type="EMBL" id="AY548484">
    <property type="protein sequence ID" value="AAT09709.1"/>
    <property type="molecule type" value="Genomic_DNA"/>
</dbReference>
<dbReference type="RefSeq" id="YP_031628.1">
    <property type="nucleotide sequence ID" value="NC_005946.1"/>
</dbReference>
<dbReference type="KEGG" id="vg:2947829"/>
<dbReference type="Proteomes" id="UP000008770">
    <property type="component" value="Segment"/>
</dbReference>
<evidence type="ECO:0000256" key="1">
    <source>
        <dbReference type="SAM" id="MobiDB-lite"/>
    </source>
</evidence>
<name>050L_FRG3G</name>
<protein>
    <recommendedName>
        <fullName>Uncharacterized protein 050L</fullName>
    </recommendedName>
</protein>
<organismHost>
    <name type="scientific">Dryophytes versicolor</name>
    <name type="common">chameleon treefrog</name>
    <dbReference type="NCBI Taxonomy" id="30343"/>
</organismHost>
<organismHost>
    <name type="scientific">Lithobates pipiens</name>
    <name type="common">Northern leopard frog</name>
    <name type="synonym">Rana pipiens</name>
    <dbReference type="NCBI Taxonomy" id="8404"/>
</organismHost>
<organismHost>
    <name type="scientific">Lithobates sylvaticus</name>
    <name type="common">Wood frog</name>
    <name type="synonym">Rana sylvatica</name>
    <dbReference type="NCBI Taxonomy" id="45438"/>
</organismHost>
<organismHost>
    <name type="scientific">Notophthalmus viridescens</name>
    <name type="common">Eastern newt</name>
    <name type="synonym">Triturus viridescens</name>
    <dbReference type="NCBI Taxonomy" id="8316"/>
</organismHost>
<reference key="1">
    <citation type="journal article" date="2004" name="Virology">
        <title>Comparative genomic analyses of frog virus 3, type species of the genus Ranavirus (family Iridoviridae).</title>
        <authorList>
            <person name="Tan W.G."/>
            <person name="Barkman T.J."/>
            <person name="Gregory Chinchar V."/>
            <person name="Essani K."/>
        </authorList>
    </citation>
    <scope>NUCLEOTIDE SEQUENCE [LARGE SCALE GENOMIC DNA]</scope>
</reference>
<keyword id="KW-1185">Reference proteome</keyword>